<evidence type="ECO:0000269" key="1">
    <source>
    </source>
</evidence>
<evidence type="ECO:0000269" key="2">
    <source>
    </source>
</evidence>
<evidence type="ECO:0000269" key="3">
    <source>
    </source>
</evidence>
<evidence type="ECO:0000269" key="4">
    <source>
    </source>
</evidence>
<evidence type="ECO:0000269" key="5">
    <source>
    </source>
</evidence>
<evidence type="ECO:0000269" key="6">
    <source>
    </source>
</evidence>
<evidence type="ECO:0000269" key="7">
    <source>
    </source>
</evidence>
<evidence type="ECO:0000269" key="8">
    <source>
    </source>
</evidence>
<evidence type="ECO:0000269" key="9">
    <source>
    </source>
</evidence>
<evidence type="ECO:0000303" key="10">
    <source>
    </source>
</evidence>
<evidence type="ECO:0000303" key="11">
    <source>
    </source>
</evidence>
<evidence type="ECO:0000305" key="12"/>
<evidence type="ECO:0000305" key="13">
    <source>
    </source>
</evidence>
<evidence type="ECO:0000305" key="14">
    <source>
    </source>
</evidence>
<evidence type="ECO:0000312" key="15">
    <source>
        <dbReference type="SGD" id="S000005233"/>
    </source>
</evidence>
<comment type="function">
    <text evidence="2 3 4 9">G1/S-specific cyclin partner of the cyclin-dependent kinase (CDK) PHO85. Essential for the control of the cell cycle at the G1/S (start) transition. The PCL1-PHO85 cyclin-CDK holoenzyme is involved in phosphorylation of the CDK inhibitor (CKI) SIC1, which is required for its ubiquitination and degradation, releasing repression of b-type cyclins and promoting exit from mitosis. Together with cyclin PCL2, positively controls degradation of sphingoid long chain base kinase LCB4. PCL1-PHO85 phosphorylates LCB4, which is required for its ubiquitination and degradation. PCL1-PHO85 also phosphorylates HMS1, NCP1 and NPA3, which may all have a role in mitotic exit.</text>
</comment>
<comment type="subunit">
    <text evidence="3 6 7 8">Forms a cyclin-CDK complex with PHO85 (PubMed:7973730, PubMed:9032248). Interacts with HMS1, NCP1 and NPA3 (PubMed:15082539, PubMed:9032248). Interacts with DMA1 (PubMed:23264631).</text>
</comment>
<comment type="interaction">
    <interactant intactId="EBI-4495">
        <id>P24867</id>
    </interactant>
    <interactant intactId="EBI-13327">
        <id>P17157</id>
        <label>PHO85</label>
    </interactant>
    <organismsDiffer>false</organismsDiffer>
    <experiments>4</experiments>
</comment>
<comment type="subcellular location">
    <subcellularLocation>
        <location evidence="2">Cytoplasm</location>
    </subcellularLocation>
    <subcellularLocation>
        <location evidence="2">Nucleus</location>
    </subcellularLocation>
    <text>Localizes to the incipient bud site.</text>
</comment>
<comment type="induction">
    <text evidence="5">By transcription factor SBF (SWI4-SWI6 cell-cycle box binding factor) in a cell cycle-regulated manner. Peaks in G1 phase.</text>
</comment>
<comment type="PTM">
    <text evidence="6">Phosphorylated by PHO85; necessary for interaction with DMA1 and subsequent degradation.</text>
</comment>
<comment type="PTM">
    <text evidence="6">Ubiquitinated by E3 ubiquitin ligase DMA1 in response to nutrient condition; this targets PCL1 for destruction.</text>
</comment>
<comment type="miscellaneous">
    <text evidence="1">Present with 606 molecules/cell in log phase SD medium.</text>
</comment>
<comment type="similarity">
    <text evidence="12">Belongs to the cyclin family. PCL1,2 subfamily.</text>
</comment>
<name>PCL1_YEAST</name>
<protein>
    <recommendedName>
        <fullName evidence="14">PHO85 cyclin-1</fullName>
    </recommendedName>
    <alternativeName>
        <fullName evidence="10">Cyclin HCS26</fullName>
    </alternativeName>
    <alternativeName>
        <fullName evidence="11">G1/S-specific cyclin PCL1</fullName>
    </alternativeName>
</protein>
<reference key="1">
    <citation type="journal article" date="1991" name="Cell">
        <title>Transcriptional activation of CLN1, CLN2, and a putative new G1 cyclin (HCS26) by SWI4, a positive regulator of G1-specific transcription.</title>
        <authorList>
            <person name="Ogas J."/>
            <person name="Andrews B.J."/>
            <person name="Herskowitz I."/>
        </authorList>
    </citation>
    <scope>NUCLEOTIDE SEQUENCE [GENOMIC DNA]</scope>
    <scope>INDUCTION</scope>
</reference>
<reference key="2">
    <citation type="journal article" date="1997" name="Nature">
        <title>The nucleotide sequence of Saccharomyces cerevisiae chromosome XIV and its evolutionary implications.</title>
        <authorList>
            <person name="Philippsen P."/>
            <person name="Kleine K."/>
            <person name="Poehlmann R."/>
            <person name="Duesterhoeft A."/>
            <person name="Hamberg K."/>
            <person name="Hegemann J.H."/>
            <person name="Obermaier B."/>
            <person name="Urrestarazu L.A."/>
            <person name="Aert R."/>
            <person name="Albermann K."/>
            <person name="Altmann R."/>
            <person name="Andre B."/>
            <person name="Baladron V."/>
            <person name="Ballesta J.P.G."/>
            <person name="Becam A.-M."/>
            <person name="Beinhauer J.D."/>
            <person name="Boskovic J."/>
            <person name="Buitrago M.J."/>
            <person name="Bussereau F."/>
            <person name="Coster F."/>
            <person name="Crouzet M."/>
            <person name="D'Angelo M."/>
            <person name="Dal Pero F."/>
            <person name="De Antoni A."/>
            <person name="del Rey F."/>
            <person name="Doignon F."/>
            <person name="Domdey H."/>
            <person name="Dubois E."/>
            <person name="Fiedler T.A."/>
            <person name="Fleig U."/>
            <person name="Floeth M."/>
            <person name="Fritz C."/>
            <person name="Gaillardin C."/>
            <person name="Garcia-Cantalejo J.M."/>
            <person name="Glansdorff N."/>
            <person name="Goffeau A."/>
            <person name="Gueldener U."/>
            <person name="Herbert C.J."/>
            <person name="Heumann K."/>
            <person name="Heuss-Neitzel D."/>
            <person name="Hilbert H."/>
            <person name="Hinni K."/>
            <person name="Iraqui Houssaini I."/>
            <person name="Jacquet M."/>
            <person name="Jimenez A."/>
            <person name="Jonniaux J.-L."/>
            <person name="Karpfinger-Hartl L."/>
            <person name="Lanfranchi G."/>
            <person name="Lepingle A."/>
            <person name="Levesque H."/>
            <person name="Lyck R."/>
            <person name="Maftahi M."/>
            <person name="Mallet L."/>
            <person name="Maurer C.T.C."/>
            <person name="Messenguy F."/>
            <person name="Mewes H.-W."/>
            <person name="Moestl D."/>
            <person name="Nasr F."/>
            <person name="Nicaud J.-M."/>
            <person name="Niedenthal R.K."/>
            <person name="Pandolfo D."/>
            <person name="Pierard A."/>
            <person name="Piravandi E."/>
            <person name="Planta R.J."/>
            <person name="Pohl T.M."/>
            <person name="Purnelle B."/>
            <person name="Rebischung C."/>
            <person name="Remacha M.A."/>
            <person name="Revuelta J.L."/>
            <person name="Rinke M."/>
            <person name="Saiz J.E."/>
            <person name="Sartorello F."/>
            <person name="Scherens B."/>
            <person name="Sen-Gupta M."/>
            <person name="Soler-Mira A."/>
            <person name="Urbanus J.H.M."/>
            <person name="Valle G."/>
            <person name="Van Dyck L."/>
            <person name="Verhasselt P."/>
            <person name="Vierendeels F."/>
            <person name="Vissers S."/>
            <person name="Voet M."/>
            <person name="Volckaert G."/>
            <person name="Wach A."/>
            <person name="Wambutt R."/>
            <person name="Wedler H."/>
            <person name="Zollner A."/>
            <person name="Hani J."/>
        </authorList>
    </citation>
    <scope>NUCLEOTIDE SEQUENCE [LARGE SCALE GENOMIC DNA]</scope>
    <source>
        <strain>ATCC 204508 / S288c</strain>
    </source>
</reference>
<reference key="3">
    <citation type="journal article" date="2014" name="G3 (Bethesda)">
        <title>The reference genome sequence of Saccharomyces cerevisiae: Then and now.</title>
        <authorList>
            <person name="Engel S.R."/>
            <person name="Dietrich F.S."/>
            <person name="Fisk D.G."/>
            <person name="Binkley G."/>
            <person name="Balakrishnan R."/>
            <person name="Costanzo M.C."/>
            <person name="Dwight S.S."/>
            <person name="Hitz B.C."/>
            <person name="Karra K."/>
            <person name="Nash R.S."/>
            <person name="Weng S."/>
            <person name="Wong E.D."/>
            <person name="Lloyd P."/>
            <person name="Skrzypek M.S."/>
            <person name="Miyasato S.R."/>
            <person name="Simison M."/>
            <person name="Cherry J.M."/>
        </authorList>
    </citation>
    <scope>GENOME REANNOTATION</scope>
    <source>
        <strain>ATCC 204508 / S288c</strain>
    </source>
</reference>
<reference key="4">
    <citation type="journal article" date="1994" name="Science">
        <title>Cell cycle control by a complex of the cyclin HCS26 (PCL1) and the kinase PHO85.</title>
        <authorList>
            <person name="Espinoza F.H."/>
            <person name="Ogas J."/>
            <person name="Herskowitz I."/>
            <person name="Morgan D.O."/>
        </authorList>
    </citation>
    <scope>CHARACTERIZATION</scope>
    <scope>INTERACTION WITH PHO85</scope>
</reference>
<reference key="5">
    <citation type="journal article" date="1997" name="Mol. Cell. Biol.">
        <title>A family of cyclin-like proteins that interact with the Pho85 cyclin-dependent kinase.</title>
        <authorList>
            <person name="Measday V."/>
            <person name="Moore L."/>
            <person name="Retnakaran R."/>
            <person name="Lee J."/>
            <person name="Donoviel M."/>
            <person name="Neiman A.M."/>
            <person name="Andrews B.J."/>
        </authorList>
    </citation>
    <scope>INTERACTION WITH PHO85</scope>
</reference>
<reference key="6">
    <citation type="journal article" date="1998" name="Mol. Biol. Cell">
        <title>Phosphorylation of Sic1, a cyclin-dependent kinase (Cdk) inhibitor, by Cdk including Pho85 kinase is required for its prompt degradation.</title>
        <authorList>
            <person name="Nishizawa M."/>
            <person name="Kawasumi M."/>
            <person name="Fujino M."/>
            <person name="Toh-e A."/>
        </authorList>
    </citation>
    <scope>FUNCTION</scope>
    <scope>PHOSPHORYLATION OF SIC1</scope>
</reference>
<reference key="7">
    <citation type="journal article" date="2003" name="Nature">
        <title>Global analysis of protein expression in yeast.</title>
        <authorList>
            <person name="Ghaemmaghami S."/>
            <person name="Huh W.-K."/>
            <person name="Bower K."/>
            <person name="Howson R.W."/>
            <person name="Belle A."/>
            <person name="Dephoure N."/>
            <person name="O'Shea E.K."/>
            <person name="Weissman J.S."/>
        </authorList>
    </citation>
    <scope>LEVEL OF PROTEIN EXPRESSION [LARGE SCALE ANALYSIS]</scope>
</reference>
<reference key="8">
    <citation type="journal article" date="2004" name="Genetics">
        <title>The identification of Pcl1-interacting proteins that genetically interact with Cla4 may indicate a link between G1 progression and mitotic exit.</title>
        <authorList>
            <person name="Keniry M.E."/>
            <person name="Kemp H.A."/>
            <person name="Rivers D.M."/>
            <person name="Sprague G.F. Jr."/>
        </authorList>
    </citation>
    <scope>FUNCTION</scope>
    <scope>INTERACTION WITH HMS1; NCP1 AND NPA3</scope>
    <scope>PHOSPHORYLATION OF HMS1; NCP1 AND NPA3</scope>
</reference>
<reference key="9">
    <citation type="journal article" date="2004" name="Nat. Cell Biol.">
        <title>Late-G1 cyclin-CDK activity is essential for control of cell morphogenesis in budding yeast.</title>
        <authorList>
            <person name="Moffat J."/>
            <person name="Andrews B.J."/>
        </authorList>
    </citation>
    <scope>FUNCTION</scope>
    <scope>SUBCELLULAR LOCATION</scope>
</reference>
<reference key="10">
    <citation type="journal article" date="2005" name="J. Biol. Chem.">
        <title>Phosphorylation by Pho85 cyclin-dependent kinase acts as a signal for the down-regulation of the yeast sphingoid long-chain base kinase Lcb4 during the stationary phase.</title>
        <authorList>
            <person name="Iwaki S."/>
            <person name="Kihara A."/>
            <person name="Sano T."/>
            <person name="Igarashi Y."/>
        </authorList>
    </citation>
    <scope>FUNCTION</scope>
    <scope>PHOSPHORYLATION OF LCB4</scope>
</reference>
<reference key="11">
    <citation type="journal article" date="2013" name="J. Biol. Chem.">
        <title>Defective in mitotic arrest 1 (Dma1) ubiquitin ligase controls G1 cyclin degradation.</title>
        <authorList>
            <person name="Hernandez-Ortega S."/>
            <person name="Bru S."/>
            <person name="Ricco N."/>
            <person name="Ramirez S."/>
            <person name="Casals N."/>
            <person name="Jimenez J."/>
            <person name="Isasa M."/>
            <person name="Crosas B."/>
            <person name="Clotet J."/>
        </authorList>
    </citation>
    <scope>UBIQUITINATION AT LYS-82 AND LYS-121</scope>
    <scope>PHOSPHORYLATION AT THR-39 AND SER-43</scope>
    <scope>INTERACTION WITH DMA1</scope>
    <scope>MUTAGENESIS OF PRO-33; THR-39 AND SER-43</scope>
</reference>
<accession>P24867</accession>
<accession>D6W0Q4</accession>
<keyword id="KW-0131">Cell cycle</keyword>
<keyword id="KW-0132">Cell division</keyword>
<keyword id="KW-0195">Cyclin</keyword>
<keyword id="KW-0963">Cytoplasm</keyword>
<keyword id="KW-1017">Isopeptide bond</keyword>
<keyword id="KW-0539">Nucleus</keyword>
<keyword id="KW-0597">Phosphoprotein</keyword>
<keyword id="KW-1185">Reference proteome</keyword>
<keyword id="KW-0832">Ubl conjugation</keyword>
<dbReference type="EMBL" id="M73966">
    <property type="protein sequence ID" value="AAA34617.1"/>
    <property type="molecule type" value="Genomic_DNA"/>
</dbReference>
<dbReference type="EMBL" id="Z71565">
    <property type="protein sequence ID" value="CAA96206.1"/>
    <property type="molecule type" value="Genomic_DNA"/>
</dbReference>
<dbReference type="EMBL" id="BK006947">
    <property type="protein sequence ID" value="DAA10270.1"/>
    <property type="molecule type" value="Genomic_DNA"/>
</dbReference>
<dbReference type="PIR" id="A40027">
    <property type="entry name" value="A40027"/>
</dbReference>
<dbReference type="RefSeq" id="NP_014110.1">
    <property type="nucleotide sequence ID" value="NM_001183127.1"/>
</dbReference>
<dbReference type="SMR" id="P24867"/>
<dbReference type="BioGRID" id="35548">
    <property type="interactions" value="91"/>
</dbReference>
<dbReference type="ComplexPortal" id="CPX-1695">
    <property type="entry name" value="PCL1-PHO85 kinase complex"/>
</dbReference>
<dbReference type="DIP" id="DIP-5803N"/>
<dbReference type="FunCoup" id="P24867">
    <property type="interactions" value="353"/>
</dbReference>
<dbReference type="IntAct" id="P24867">
    <property type="interactions" value="3"/>
</dbReference>
<dbReference type="MINT" id="P24867"/>
<dbReference type="STRING" id="4932.YNL289W"/>
<dbReference type="GlyGen" id="P24867">
    <property type="glycosylation" value="1 site"/>
</dbReference>
<dbReference type="iPTMnet" id="P24867"/>
<dbReference type="PaxDb" id="4932-YNL289W"/>
<dbReference type="PeptideAtlas" id="P24867"/>
<dbReference type="EnsemblFungi" id="YNL289W_mRNA">
    <property type="protein sequence ID" value="YNL289W"/>
    <property type="gene ID" value="YNL289W"/>
</dbReference>
<dbReference type="GeneID" id="855427"/>
<dbReference type="KEGG" id="sce:YNL289W"/>
<dbReference type="AGR" id="SGD:S000005233"/>
<dbReference type="SGD" id="S000005233">
    <property type="gene designation" value="PCL1"/>
</dbReference>
<dbReference type="VEuPathDB" id="FungiDB:YNL289W"/>
<dbReference type="eggNOG" id="KOG1674">
    <property type="taxonomic scope" value="Eukaryota"/>
</dbReference>
<dbReference type="GeneTree" id="ENSGT00390000000862"/>
<dbReference type="HOGENOM" id="CLU_018149_0_2_1"/>
<dbReference type="InParanoid" id="P24867"/>
<dbReference type="OMA" id="HEEYIQH"/>
<dbReference type="OrthoDB" id="10250320at2759"/>
<dbReference type="BioCyc" id="YEAST:G3O-33279-MONOMER"/>
<dbReference type="BioGRID-ORCS" id="855427">
    <property type="hits" value="0 hits in 10 CRISPR screens"/>
</dbReference>
<dbReference type="PRO" id="PR:P24867"/>
<dbReference type="Proteomes" id="UP000002311">
    <property type="component" value="Chromosome XIV"/>
</dbReference>
<dbReference type="RNAct" id="P24867">
    <property type="molecule type" value="protein"/>
</dbReference>
<dbReference type="GO" id="GO:0005935">
    <property type="term" value="C:cellular bud neck"/>
    <property type="evidence" value="ECO:0000303"/>
    <property type="project" value="ComplexPortal"/>
</dbReference>
<dbReference type="GO" id="GO:0000307">
    <property type="term" value="C:cyclin-dependent protein kinase holoenzyme complex"/>
    <property type="evidence" value="ECO:0000353"/>
    <property type="project" value="SGD"/>
</dbReference>
<dbReference type="GO" id="GO:0005737">
    <property type="term" value="C:cytoplasm"/>
    <property type="evidence" value="ECO:0007669"/>
    <property type="project" value="UniProtKB-SubCell"/>
</dbReference>
<dbReference type="GO" id="GO:0000131">
    <property type="term" value="C:incipient cellular bud site"/>
    <property type="evidence" value="ECO:0000314"/>
    <property type="project" value="SGD"/>
</dbReference>
<dbReference type="GO" id="GO:0005634">
    <property type="term" value="C:nucleus"/>
    <property type="evidence" value="ECO:0000314"/>
    <property type="project" value="SGD"/>
</dbReference>
<dbReference type="GO" id="GO:0016538">
    <property type="term" value="F:cyclin-dependent protein serine/threonine kinase regulator activity"/>
    <property type="evidence" value="ECO:0000314"/>
    <property type="project" value="SGD"/>
</dbReference>
<dbReference type="GO" id="GO:0019901">
    <property type="term" value="F:protein kinase binding"/>
    <property type="evidence" value="ECO:0007669"/>
    <property type="project" value="InterPro"/>
</dbReference>
<dbReference type="GO" id="GO:0051301">
    <property type="term" value="P:cell division"/>
    <property type="evidence" value="ECO:0007669"/>
    <property type="project" value="UniProtKB-KW"/>
</dbReference>
<dbReference type="GO" id="GO:0000082">
    <property type="term" value="P:G1/S transition of mitotic cell cycle"/>
    <property type="evidence" value="ECO:0000303"/>
    <property type="project" value="ComplexPortal"/>
</dbReference>
<dbReference type="GO" id="GO:0001676">
    <property type="term" value="P:long-chain fatty acid metabolic process"/>
    <property type="evidence" value="ECO:0000303"/>
    <property type="project" value="ComplexPortal"/>
</dbReference>
<dbReference type="GO" id="GO:0016239">
    <property type="term" value="P:positive regulation of macroautophagy"/>
    <property type="evidence" value="ECO:0000315"/>
    <property type="project" value="SGD"/>
</dbReference>
<dbReference type="GO" id="GO:0051726">
    <property type="term" value="P:regulation of cell cycle"/>
    <property type="evidence" value="ECO:0007669"/>
    <property type="project" value="InterPro"/>
</dbReference>
<dbReference type="GO" id="GO:0051302">
    <property type="term" value="P:regulation of cell division"/>
    <property type="evidence" value="ECO:0000314"/>
    <property type="project" value="ComplexPortal"/>
</dbReference>
<dbReference type="GO" id="GO:0032878">
    <property type="term" value="P:regulation of establishment or maintenance of cell polarity"/>
    <property type="evidence" value="ECO:0000316"/>
    <property type="project" value="SGD"/>
</dbReference>
<dbReference type="GO" id="GO:0031106">
    <property type="term" value="P:septin ring organization"/>
    <property type="evidence" value="ECO:0000316"/>
    <property type="project" value="SGD"/>
</dbReference>
<dbReference type="CDD" id="cd20557">
    <property type="entry name" value="CYCLIN_ScPCL1-like"/>
    <property type="match status" value="1"/>
</dbReference>
<dbReference type="FunFam" id="1.10.472.10:FF:000084">
    <property type="entry name" value="PCL9p Cyclin"/>
    <property type="match status" value="1"/>
</dbReference>
<dbReference type="Gene3D" id="1.10.472.10">
    <property type="entry name" value="Cyclin-like"/>
    <property type="match status" value="1"/>
</dbReference>
<dbReference type="InterPro" id="IPR013763">
    <property type="entry name" value="Cyclin-like_dom"/>
</dbReference>
<dbReference type="InterPro" id="IPR036915">
    <property type="entry name" value="Cyclin-like_sf"/>
</dbReference>
<dbReference type="InterPro" id="IPR006671">
    <property type="entry name" value="Cyclin_N"/>
</dbReference>
<dbReference type="InterPro" id="IPR013922">
    <property type="entry name" value="Cyclin_PHO80-like"/>
</dbReference>
<dbReference type="InterPro" id="IPR012104">
    <property type="entry name" value="PHO85_cyclin_1/2/9"/>
</dbReference>
<dbReference type="PANTHER" id="PTHR15615">
    <property type="match status" value="1"/>
</dbReference>
<dbReference type="PANTHER" id="PTHR15615:SF114">
    <property type="entry name" value="PHO85 CYCLIN-1"/>
    <property type="match status" value="1"/>
</dbReference>
<dbReference type="Pfam" id="PF00134">
    <property type="entry name" value="Cyclin_N"/>
    <property type="match status" value="1"/>
</dbReference>
<dbReference type="PIRSF" id="PIRSF016511">
    <property type="entry name" value="Cyclin_Pcl"/>
    <property type="match status" value="1"/>
</dbReference>
<dbReference type="SMART" id="SM00385">
    <property type="entry name" value="CYCLIN"/>
    <property type="match status" value="1"/>
</dbReference>
<dbReference type="SUPFAM" id="SSF47954">
    <property type="entry name" value="Cyclin-like"/>
    <property type="match status" value="1"/>
</dbReference>
<sequence length="279" mass="32095">MCEYSKALHILLKSPVTDDIIKFLTDTTLRVVPSSNYPTPPGSPGEKHLTRLPSLMTFITRLVRYTNVYTPTLLTAACYLNKLKRILPRDATGLPSTIHRIFLACLILSAKFHNDSSPLNKHWARYTDGLFTLEDINLMERQLLQLLNWDLRVNTEDLILDLQPLLEPIKQDLARSSDQRKRINMMMSMNRRTCAGTSPIRSNNRFKLYEKQRNVSIASDLSSATLVDSCNDLRRLKDVTNIANNTVANTNYVRTVEKWNDNVNRQSWDLEQIMSQHGF</sequence>
<gene>
    <name evidence="11" type="primary">PCL1</name>
    <name evidence="10" type="synonym">HCS26</name>
    <name evidence="15" type="ordered locus">YNL289W</name>
    <name type="ORF">N0536</name>
</gene>
<proteinExistence type="evidence at protein level"/>
<feature type="chain" id="PRO_0000080499" description="PHO85 cyclin-1">
    <location>
        <begin position="1"/>
        <end position="279"/>
    </location>
</feature>
<feature type="domain" description="Cyclin N-terminal">
    <location>
        <begin position="19"/>
        <end position="152"/>
    </location>
</feature>
<feature type="region of interest" description="Required for degradation by DMA1" evidence="6">
    <location>
        <begin position="29"/>
        <end position="36"/>
    </location>
</feature>
<feature type="modified residue" description="Phosphothreonine; by PHO85" evidence="13">
    <location>
        <position position="39"/>
    </location>
</feature>
<feature type="modified residue" description="Phosphoserine; by PHO85" evidence="13">
    <location>
        <position position="43"/>
    </location>
</feature>
<feature type="cross-link" description="Glycyl lysine isopeptide (Lys-Gly) (interchain with G-Cter in ubiquitin)" evidence="13">
    <location>
        <position position="82"/>
    </location>
</feature>
<feature type="cross-link" description="Glycyl lysine isopeptide (Lys-Gly) (interchain with G-Cter in ubiquitin)" evidence="13">
    <location>
        <position position="121"/>
    </location>
</feature>
<feature type="mutagenesis site" description="Stabilizes PCL1." evidence="6">
    <original>P</original>
    <variation>N</variation>
    <location>
        <position position="33"/>
    </location>
</feature>
<feature type="mutagenesis site" description="In pcl1-2A; stabilizes PCL1; when associated with A-43." evidence="6">
    <original>T</original>
    <variation>A</variation>
    <location>
        <position position="39"/>
    </location>
</feature>
<feature type="mutagenesis site" description="In pcl1-2A; stabilizes PCL1; when associated with A-39." evidence="6">
    <original>S</original>
    <variation>A</variation>
    <location>
        <position position="43"/>
    </location>
</feature>
<organism>
    <name type="scientific">Saccharomyces cerevisiae (strain ATCC 204508 / S288c)</name>
    <name type="common">Baker's yeast</name>
    <dbReference type="NCBI Taxonomy" id="559292"/>
    <lineage>
        <taxon>Eukaryota</taxon>
        <taxon>Fungi</taxon>
        <taxon>Dikarya</taxon>
        <taxon>Ascomycota</taxon>
        <taxon>Saccharomycotina</taxon>
        <taxon>Saccharomycetes</taxon>
        <taxon>Saccharomycetales</taxon>
        <taxon>Saccharomycetaceae</taxon>
        <taxon>Saccharomyces</taxon>
    </lineage>
</organism>